<accession>G4MTF8</accession>
<reference key="1">
    <citation type="journal article" date="2005" name="Nature">
        <title>The genome sequence of the rice blast fungus Magnaporthe grisea.</title>
        <authorList>
            <person name="Dean R.A."/>
            <person name="Talbot N.J."/>
            <person name="Ebbole D.J."/>
            <person name="Farman M.L."/>
            <person name="Mitchell T.K."/>
            <person name="Orbach M.J."/>
            <person name="Thon M.R."/>
            <person name="Kulkarni R."/>
            <person name="Xu J.-R."/>
            <person name="Pan H."/>
            <person name="Read N.D."/>
            <person name="Lee Y.-H."/>
            <person name="Carbone I."/>
            <person name="Brown D."/>
            <person name="Oh Y.Y."/>
            <person name="Donofrio N."/>
            <person name="Jeong J.S."/>
            <person name="Soanes D.M."/>
            <person name="Djonovic S."/>
            <person name="Kolomiets E."/>
            <person name="Rehmeyer C."/>
            <person name="Li W."/>
            <person name="Harding M."/>
            <person name="Kim S."/>
            <person name="Lebrun M.-H."/>
            <person name="Bohnert H."/>
            <person name="Coughlan S."/>
            <person name="Butler J."/>
            <person name="Calvo S.E."/>
            <person name="Ma L.-J."/>
            <person name="Nicol R."/>
            <person name="Purcell S."/>
            <person name="Nusbaum C."/>
            <person name="Galagan J.E."/>
            <person name="Birren B.W."/>
        </authorList>
    </citation>
    <scope>NUCLEOTIDE SEQUENCE [LARGE SCALE GENOMIC DNA]</scope>
    <source>
        <strain>70-15 / ATCC MYA-4617 / FGSC 8958</strain>
    </source>
</reference>
<protein>
    <recommendedName>
        <fullName>Endo-1,4-beta-xylanase 2</fullName>
        <shortName>Xylanase 2</shortName>
        <ecNumber>3.2.1.8</ecNumber>
    </recommendedName>
    <alternativeName>
        <fullName>1,4-beta-D-xylan xylanohydrolase 2</fullName>
    </alternativeName>
</protein>
<proteinExistence type="inferred from homology"/>
<evidence type="ECO:0000250" key="1"/>
<evidence type="ECO:0000255" key="2"/>
<evidence type="ECO:0000255" key="3">
    <source>
        <dbReference type="PROSITE-ProRule" id="PRU01096"/>
    </source>
</evidence>
<evidence type="ECO:0000305" key="4"/>
<comment type="function">
    <text evidence="1">Endo-1,4-beta-xylanase involved in the hydrolysis of xylan, a major structural heterogeneous polysaccharide found in plant biomass representing the second most abundant polysaccharide in the biosphere, after cellulose. Accounts for approximately 70 percent of the endoxylanase activity in the culture filtrate (By similarity).</text>
</comment>
<comment type="catalytic activity">
    <reaction>
        <text>Endohydrolysis of (1-&gt;4)-beta-D-xylosidic linkages in xylans.</text>
        <dbReference type="EC" id="3.2.1.8"/>
    </reaction>
</comment>
<comment type="pathway">
    <text>Glycan degradation; xylan degradation.</text>
</comment>
<comment type="subcellular location">
    <subcellularLocation>
        <location evidence="1">Secreted</location>
    </subcellularLocation>
</comment>
<comment type="similarity">
    <text evidence="4">Belongs to the glycosyl hydrolase 10 (cellulase F) family.</text>
</comment>
<dbReference type="EC" id="3.2.1.8"/>
<dbReference type="EMBL" id="CM001232">
    <property type="protein sequence ID" value="EHA54709.1"/>
    <property type="molecule type" value="Genomic_DNA"/>
</dbReference>
<dbReference type="RefSeq" id="XP_003714516.1">
    <property type="nucleotide sequence ID" value="XM_003714468.1"/>
</dbReference>
<dbReference type="SMR" id="G4MTF8"/>
<dbReference type="STRING" id="242507.G4MTF8"/>
<dbReference type="CAZy" id="GH10">
    <property type="family name" value="Glycoside Hydrolase Family 10"/>
</dbReference>
<dbReference type="GlyCosmos" id="G4MTF8">
    <property type="glycosylation" value="2 sites, No reported glycans"/>
</dbReference>
<dbReference type="EnsemblFungi" id="MGG_01542T0">
    <property type="protein sequence ID" value="MGG_01542T0"/>
    <property type="gene ID" value="MGG_01542"/>
</dbReference>
<dbReference type="GeneID" id="2679400"/>
<dbReference type="KEGG" id="mgr:MGG_01542"/>
<dbReference type="VEuPathDB" id="FungiDB:MGG_01542"/>
<dbReference type="eggNOG" id="ENOG502QSCW">
    <property type="taxonomic scope" value="Eukaryota"/>
</dbReference>
<dbReference type="HOGENOM" id="CLU_020161_2_0_1"/>
<dbReference type="InParanoid" id="G4MTF8"/>
<dbReference type="OMA" id="SNQRWTR"/>
<dbReference type="OrthoDB" id="3055998at2759"/>
<dbReference type="UniPathway" id="UPA00114"/>
<dbReference type="PHI-base" id="PHI:2204"/>
<dbReference type="Proteomes" id="UP000009058">
    <property type="component" value="Chromosome 2"/>
</dbReference>
<dbReference type="GO" id="GO:0005576">
    <property type="term" value="C:extracellular region"/>
    <property type="evidence" value="ECO:0007669"/>
    <property type="project" value="UniProtKB-SubCell"/>
</dbReference>
<dbReference type="GO" id="GO:0031176">
    <property type="term" value="F:endo-1,4-beta-xylanase activity"/>
    <property type="evidence" value="ECO:0007669"/>
    <property type="project" value="UniProtKB-EC"/>
</dbReference>
<dbReference type="GO" id="GO:0045493">
    <property type="term" value="P:xylan catabolic process"/>
    <property type="evidence" value="ECO:0007669"/>
    <property type="project" value="UniProtKB-UniPathway"/>
</dbReference>
<dbReference type="FunFam" id="3.20.20.80:FF:000094">
    <property type="entry name" value="Endo-1,4-beta-xylanase"/>
    <property type="match status" value="1"/>
</dbReference>
<dbReference type="Gene3D" id="3.20.20.80">
    <property type="entry name" value="Glycosidases"/>
    <property type="match status" value="1"/>
</dbReference>
<dbReference type="InterPro" id="IPR044846">
    <property type="entry name" value="GH10"/>
</dbReference>
<dbReference type="InterPro" id="IPR001000">
    <property type="entry name" value="GH10_dom"/>
</dbReference>
<dbReference type="InterPro" id="IPR017853">
    <property type="entry name" value="Glycoside_hydrolase_SF"/>
</dbReference>
<dbReference type="PANTHER" id="PTHR31490:SF76">
    <property type="entry name" value="ENDO-1,4-BETA-XYLANASE C"/>
    <property type="match status" value="1"/>
</dbReference>
<dbReference type="PANTHER" id="PTHR31490">
    <property type="entry name" value="GLYCOSYL HYDROLASE"/>
    <property type="match status" value="1"/>
</dbReference>
<dbReference type="Pfam" id="PF00331">
    <property type="entry name" value="Glyco_hydro_10"/>
    <property type="match status" value="1"/>
</dbReference>
<dbReference type="PRINTS" id="PR00134">
    <property type="entry name" value="GLHYDRLASE10"/>
</dbReference>
<dbReference type="SMART" id="SM00633">
    <property type="entry name" value="Glyco_10"/>
    <property type="match status" value="1"/>
</dbReference>
<dbReference type="SUPFAM" id="SSF51445">
    <property type="entry name" value="(Trans)glycosidases"/>
    <property type="match status" value="1"/>
</dbReference>
<dbReference type="PROSITE" id="PS51760">
    <property type="entry name" value="GH10_2"/>
    <property type="match status" value="1"/>
</dbReference>
<feature type="signal peptide" evidence="2">
    <location>
        <begin position="1"/>
        <end position="17"/>
    </location>
</feature>
<feature type="chain" id="PRO_0000429620" description="Endo-1,4-beta-xylanase 2">
    <location>
        <begin position="18"/>
        <end position="331"/>
    </location>
</feature>
<feature type="domain" description="GH10" evidence="3">
    <location>
        <begin position="31"/>
        <end position="329"/>
    </location>
</feature>
<feature type="active site" description="Proton donor" evidence="1">
    <location>
        <position position="159"/>
    </location>
</feature>
<feature type="active site" description="Nucleophile" evidence="1">
    <location>
        <position position="266"/>
    </location>
</feature>
<feature type="glycosylation site" description="N-linked (GlcNAc...) asparagine" evidence="2">
    <location>
        <position position="105"/>
    </location>
</feature>
<feature type="glycosylation site" description="N-linked (GlcNAc...) asparagine" evidence="2">
    <location>
        <position position="301"/>
    </location>
</feature>
<feature type="disulfide bond" evidence="1">
    <location>
        <begin position="284"/>
        <end position="290"/>
    </location>
</feature>
<name>XYN2_PYRO7</name>
<gene>
    <name type="primary">XYL2</name>
    <name type="synonym">XYN33</name>
    <name type="ORF">MGG_01542</name>
</gene>
<sequence>MKASSVLLGLAPLAALAAPTPEAELSARQAQQSIDALMKAKGKLYFGTATDQGLLNTGKNSAIIKADFGQVTPENSMKWQSLENTRGQYNWAPADALVNFAVSNNKSIRGHTLIWHSQLPGWVNNINDRNQLTTVIQNHVATVMGRWKGKIRAWDVVNEIFNEDGTMRQSVFSRVLGEDFVRIAFEAARKADPNAKLYINDYNLDSPNAAKLTKGMVAHVKKWLAAGVPIDGIGSQGHLQSGQGNGLAQAIKALADSGVKEVAVTELDIQGNNANDYAAVTKGCLAVPACVGITAWGVRDNDSWRPQGNPLLFDSNYNPKAAYNSVVQALK</sequence>
<keyword id="KW-0119">Carbohydrate metabolism</keyword>
<keyword id="KW-1015">Disulfide bond</keyword>
<keyword id="KW-0325">Glycoprotein</keyword>
<keyword id="KW-0326">Glycosidase</keyword>
<keyword id="KW-0378">Hydrolase</keyword>
<keyword id="KW-0624">Polysaccharide degradation</keyword>
<keyword id="KW-1185">Reference proteome</keyword>
<keyword id="KW-0964">Secreted</keyword>
<keyword id="KW-0732">Signal</keyword>
<keyword id="KW-0858">Xylan degradation</keyword>
<organism>
    <name type="scientific">Pyricularia oryzae (strain 70-15 / ATCC MYA-4617 / FGSC 8958)</name>
    <name type="common">Rice blast fungus</name>
    <name type="synonym">Magnaporthe oryzae</name>
    <dbReference type="NCBI Taxonomy" id="242507"/>
    <lineage>
        <taxon>Eukaryota</taxon>
        <taxon>Fungi</taxon>
        <taxon>Dikarya</taxon>
        <taxon>Ascomycota</taxon>
        <taxon>Pezizomycotina</taxon>
        <taxon>Sordariomycetes</taxon>
        <taxon>Sordariomycetidae</taxon>
        <taxon>Magnaporthales</taxon>
        <taxon>Pyriculariaceae</taxon>
        <taxon>Pyricularia</taxon>
    </lineage>
</organism>